<reference key="1">
    <citation type="journal article" date="2006" name="Proc. Natl. Acad. Sci. U.S.A.">
        <title>Burkholderia xenovorans LB400 harbors a multi-replicon, 9.73-Mbp genome shaped for versatility.</title>
        <authorList>
            <person name="Chain P.S.G."/>
            <person name="Denef V.J."/>
            <person name="Konstantinidis K.T."/>
            <person name="Vergez L.M."/>
            <person name="Agullo L."/>
            <person name="Reyes V.L."/>
            <person name="Hauser L."/>
            <person name="Cordova M."/>
            <person name="Gomez L."/>
            <person name="Gonzalez M."/>
            <person name="Land M."/>
            <person name="Lao V."/>
            <person name="Larimer F."/>
            <person name="LiPuma J.J."/>
            <person name="Mahenthiralingam E."/>
            <person name="Malfatti S.A."/>
            <person name="Marx C.J."/>
            <person name="Parnell J.J."/>
            <person name="Ramette A."/>
            <person name="Richardson P."/>
            <person name="Seeger M."/>
            <person name="Smith D."/>
            <person name="Spilker T."/>
            <person name="Sul W.J."/>
            <person name="Tsoi T.V."/>
            <person name="Ulrich L.E."/>
            <person name="Zhulin I.B."/>
            <person name="Tiedje J.M."/>
        </authorList>
    </citation>
    <scope>NUCLEOTIDE SEQUENCE [LARGE SCALE GENOMIC DNA]</scope>
    <source>
        <strain>LB400</strain>
    </source>
</reference>
<name>ACCA_PARXL</name>
<feature type="chain" id="PRO_1000062596" description="Acetyl-coenzyme A carboxylase carboxyl transferase subunit alpha">
    <location>
        <begin position="1"/>
        <end position="323"/>
    </location>
</feature>
<feature type="domain" description="CoA carboxyltransferase C-terminal" evidence="2">
    <location>
        <begin position="39"/>
        <end position="293"/>
    </location>
</feature>
<protein>
    <recommendedName>
        <fullName evidence="1">Acetyl-coenzyme A carboxylase carboxyl transferase subunit alpha</fullName>
        <shortName evidence="1">ACCase subunit alpha</shortName>
        <shortName evidence="1">Acetyl-CoA carboxylase carboxyltransferase subunit alpha</shortName>
        <ecNumber evidence="1">2.1.3.15</ecNumber>
    </recommendedName>
</protein>
<gene>
    <name evidence="1" type="primary">accA</name>
    <name type="ordered locus">Bxeno_A2789</name>
    <name type="ORF">Bxe_A1628</name>
</gene>
<proteinExistence type="inferred from homology"/>
<accession>Q13X62</accession>
<comment type="function">
    <text evidence="1">Component of the acetyl coenzyme A carboxylase (ACC) complex. First, biotin carboxylase catalyzes the carboxylation of biotin on its carrier protein (BCCP) and then the CO(2) group is transferred by the carboxyltransferase to acetyl-CoA to form malonyl-CoA.</text>
</comment>
<comment type="catalytic activity">
    <reaction evidence="1">
        <text>N(6)-carboxybiotinyl-L-lysyl-[protein] + acetyl-CoA = N(6)-biotinyl-L-lysyl-[protein] + malonyl-CoA</text>
        <dbReference type="Rhea" id="RHEA:54728"/>
        <dbReference type="Rhea" id="RHEA-COMP:10505"/>
        <dbReference type="Rhea" id="RHEA-COMP:10506"/>
        <dbReference type="ChEBI" id="CHEBI:57288"/>
        <dbReference type="ChEBI" id="CHEBI:57384"/>
        <dbReference type="ChEBI" id="CHEBI:83144"/>
        <dbReference type="ChEBI" id="CHEBI:83145"/>
        <dbReference type="EC" id="2.1.3.15"/>
    </reaction>
</comment>
<comment type="pathway">
    <text evidence="1">Lipid metabolism; malonyl-CoA biosynthesis; malonyl-CoA from acetyl-CoA: step 1/1.</text>
</comment>
<comment type="subunit">
    <text evidence="1">Acetyl-CoA carboxylase is a heterohexamer composed of biotin carboxyl carrier protein (AccB), biotin carboxylase (AccC) and two subunits each of ACCase subunit alpha (AccA) and ACCase subunit beta (AccD).</text>
</comment>
<comment type="subcellular location">
    <subcellularLocation>
        <location evidence="1">Cytoplasm</location>
    </subcellularLocation>
</comment>
<comment type="similarity">
    <text evidence="1">Belongs to the AccA family.</text>
</comment>
<dbReference type="EC" id="2.1.3.15" evidence="1"/>
<dbReference type="EMBL" id="CP000270">
    <property type="protein sequence ID" value="ABE31327.1"/>
    <property type="molecule type" value="Genomic_DNA"/>
</dbReference>
<dbReference type="RefSeq" id="WP_007181378.1">
    <property type="nucleotide sequence ID" value="NZ_CP008760.1"/>
</dbReference>
<dbReference type="SMR" id="Q13X62"/>
<dbReference type="STRING" id="266265.Bxe_A1628"/>
<dbReference type="KEGG" id="bxb:DR64_3786"/>
<dbReference type="KEGG" id="bxe:Bxe_A1628"/>
<dbReference type="eggNOG" id="COG0825">
    <property type="taxonomic scope" value="Bacteria"/>
</dbReference>
<dbReference type="OrthoDB" id="9808023at2"/>
<dbReference type="UniPathway" id="UPA00655">
    <property type="reaction ID" value="UER00711"/>
</dbReference>
<dbReference type="Proteomes" id="UP000001817">
    <property type="component" value="Chromosome 1"/>
</dbReference>
<dbReference type="GO" id="GO:0009317">
    <property type="term" value="C:acetyl-CoA carboxylase complex"/>
    <property type="evidence" value="ECO:0007669"/>
    <property type="project" value="InterPro"/>
</dbReference>
<dbReference type="GO" id="GO:0003989">
    <property type="term" value="F:acetyl-CoA carboxylase activity"/>
    <property type="evidence" value="ECO:0007669"/>
    <property type="project" value="InterPro"/>
</dbReference>
<dbReference type="GO" id="GO:0005524">
    <property type="term" value="F:ATP binding"/>
    <property type="evidence" value="ECO:0007669"/>
    <property type="project" value="UniProtKB-KW"/>
</dbReference>
<dbReference type="GO" id="GO:0016743">
    <property type="term" value="F:carboxyl- or carbamoyltransferase activity"/>
    <property type="evidence" value="ECO:0007669"/>
    <property type="project" value="UniProtKB-UniRule"/>
</dbReference>
<dbReference type="GO" id="GO:0006633">
    <property type="term" value="P:fatty acid biosynthetic process"/>
    <property type="evidence" value="ECO:0007669"/>
    <property type="project" value="UniProtKB-KW"/>
</dbReference>
<dbReference type="GO" id="GO:2001295">
    <property type="term" value="P:malonyl-CoA biosynthetic process"/>
    <property type="evidence" value="ECO:0007669"/>
    <property type="project" value="UniProtKB-UniRule"/>
</dbReference>
<dbReference type="Gene3D" id="3.90.226.10">
    <property type="entry name" value="2-enoyl-CoA Hydratase, Chain A, domain 1"/>
    <property type="match status" value="1"/>
</dbReference>
<dbReference type="HAMAP" id="MF_00823">
    <property type="entry name" value="AcetylCoA_CT_alpha"/>
    <property type="match status" value="1"/>
</dbReference>
<dbReference type="InterPro" id="IPR001095">
    <property type="entry name" value="Acetyl_CoA_COase_a_su"/>
</dbReference>
<dbReference type="InterPro" id="IPR029045">
    <property type="entry name" value="ClpP/crotonase-like_dom_sf"/>
</dbReference>
<dbReference type="InterPro" id="IPR011763">
    <property type="entry name" value="COA_CT_C"/>
</dbReference>
<dbReference type="NCBIfam" id="TIGR00513">
    <property type="entry name" value="accA"/>
    <property type="match status" value="1"/>
</dbReference>
<dbReference type="NCBIfam" id="NF041504">
    <property type="entry name" value="AccA_sub"/>
    <property type="match status" value="1"/>
</dbReference>
<dbReference type="NCBIfam" id="NF004344">
    <property type="entry name" value="PRK05724.1"/>
    <property type="match status" value="1"/>
</dbReference>
<dbReference type="PANTHER" id="PTHR42853">
    <property type="entry name" value="ACETYL-COENZYME A CARBOXYLASE CARBOXYL TRANSFERASE SUBUNIT ALPHA"/>
    <property type="match status" value="1"/>
</dbReference>
<dbReference type="PANTHER" id="PTHR42853:SF3">
    <property type="entry name" value="ACETYL-COENZYME A CARBOXYLASE CARBOXYL TRANSFERASE SUBUNIT ALPHA, CHLOROPLASTIC"/>
    <property type="match status" value="1"/>
</dbReference>
<dbReference type="Pfam" id="PF03255">
    <property type="entry name" value="ACCA"/>
    <property type="match status" value="1"/>
</dbReference>
<dbReference type="PRINTS" id="PR01069">
    <property type="entry name" value="ACCCTRFRASEA"/>
</dbReference>
<dbReference type="SUPFAM" id="SSF52096">
    <property type="entry name" value="ClpP/crotonase"/>
    <property type="match status" value="1"/>
</dbReference>
<dbReference type="PROSITE" id="PS50989">
    <property type="entry name" value="COA_CT_CTER"/>
    <property type="match status" value="1"/>
</dbReference>
<keyword id="KW-0067">ATP-binding</keyword>
<keyword id="KW-0963">Cytoplasm</keyword>
<keyword id="KW-0275">Fatty acid biosynthesis</keyword>
<keyword id="KW-0276">Fatty acid metabolism</keyword>
<keyword id="KW-0444">Lipid biosynthesis</keyword>
<keyword id="KW-0443">Lipid metabolism</keyword>
<keyword id="KW-0547">Nucleotide-binding</keyword>
<keyword id="KW-1185">Reference proteome</keyword>
<keyword id="KW-0808">Transferase</keyword>
<organism>
    <name type="scientific">Paraburkholderia xenovorans (strain LB400)</name>
    <dbReference type="NCBI Taxonomy" id="266265"/>
    <lineage>
        <taxon>Bacteria</taxon>
        <taxon>Pseudomonadati</taxon>
        <taxon>Pseudomonadota</taxon>
        <taxon>Betaproteobacteria</taxon>
        <taxon>Burkholderiales</taxon>
        <taxon>Burkholderiaceae</taxon>
        <taxon>Paraburkholderia</taxon>
    </lineage>
</organism>
<evidence type="ECO:0000255" key="1">
    <source>
        <dbReference type="HAMAP-Rule" id="MF_00823"/>
    </source>
</evidence>
<evidence type="ECO:0000255" key="2">
    <source>
        <dbReference type="PROSITE-ProRule" id="PRU01137"/>
    </source>
</evidence>
<sequence length="323" mass="35839">MKTTFLDFEQPIAELEAKIEELRFVQDDSAVDISEEIERLSKKSQQLTKDLYANLTPWQVSQIARHPQRPYTFDYVNELFTDFHELHGDRNYADDLSIVGGLARFNGQACMVIGHQKGRDTKERALRNFGMPRPEGYRKAERLMRLAEKFGLPIFTFIDTPGAYPGIGAEERGQSEAIGRNLYVMAELKTPLIATIIGEGGSGGALAIAVGDSVLMLQFSTYSVISPEGCASILWKSAAKAPEAAEALGLTAHRLKALGLIDKIVNEPLGGAHRDPKGMAAMLRRALADSLRQFQGMSINDLRQRRFERLMSYGKFKETTPGA</sequence>